<name>UREEF_BORBO</name>
<feature type="chain" id="PRO_0000344203" description="Bifunctional urease accessory protein UreEF">
    <location>
        <begin position="1"/>
        <end position="433"/>
    </location>
</feature>
<feature type="region of interest" description="Urease accessory protein UreE">
    <location>
        <begin position="1"/>
        <end position="200"/>
    </location>
</feature>
<feature type="region of interest" description="Urease accessory protein UreF">
    <location>
        <begin position="200"/>
        <end position="433"/>
    </location>
</feature>
<evidence type="ECO:0000250" key="1"/>
<evidence type="ECO:0000305" key="2"/>
<sequence>MKIANTFIKRGAAGGLDLSQAPGVTLTLAERRRSRQRLDLDEGRGELGMAIERGQTLRDGDVLVAEDGTYVVVRAALEDVARVTAATPWQLARAAYHLGNRHVLLEIAERHLQFEYDAVLIDMLAQLGGVTATRLRAVFEPDVGAYGGGHRHGHDESFGDDYALAQAAYHAHEHTPMRTPMPADTATFIPVMATAASTASMTPSLDAGQLAALLHLSSPALPIGGFSYSQGLEAAIELGLVHDEASTLAWIESQLVTVMARAEAPLWCLLFEAWRAGDDAAAHGWNQWFHASRETRELRQETEQMGRSLARLAQELGWGTAATRAAVAALRPATLPAVHACACAMWALPREAGLGAYVFSWLENQVAAAIKGVPLGQMAGQRMLERLRAGLPAVLADARARAGATPPRLDTFAPQYALVSARHETQFSRLFRS</sequence>
<reference key="1">
    <citation type="journal article" date="1998" name="Gene">
        <title>Characterisation of the urease gene cluster in Bordetella bronchiseptica.</title>
        <authorList>
            <person name="McMillan D.J."/>
            <person name="Mau M."/>
            <person name="Walker M.J."/>
        </authorList>
    </citation>
    <scope>NUCLEOTIDE SEQUENCE [GENOMIC DNA]</scope>
    <source>
        <strain>BB7866</strain>
    </source>
</reference>
<accession>O06708</accession>
<comment type="function">
    <text evidence="1">Involved in urease metallocenter assembly. Binds nickel. Probably functions as a nickel donor during metallocenter assembly (By similarity).</text>
</comment>
<comment type="function">
    <text evidence="1">Required for maturation of urease via the functional incorporation of the urease nickel metallocenter.</text>
</comment>
<comment type="subunit">
    <text evidence="1">UreD, UreF and UreG form a complex that acts as a GTP-hydrolysis-dependent molecular chaperone, activating the urease apoprotein by helping to assemble the nickel containing metallocenter of UreC. The UreE protein probably delivers the nickel (By similarity).</text>
</comment>
<comment type="subcellular location">
    <subcellularLocation>
        <location evidence="1">Cytoplasm</location>
    </subcellularLocation>
</comment>
<comment type="similarity">
    <text evidence="2">In the N-terminal section; belongs to the UreE family.</text>
</comment>
<comment type="similarity">
    <text evidence="2">In the C-terminal section; belongs to the UreF family.</text>
</comment>
<gene>
    <name type="primary">ureEF</name>
</gene>
<proteinExistence type="inferred from homology"/>
<organism>
    <name type="scientific">Bordetella bronchiseptica</name>
    <name type="common">Alcaligenes bronchisepticus</name>
    <dbReference type="NCBI Taxonomy" id="518"/>
    <lineage>
        <taxon>Bacteria</taxon>
        <taxon>Pseudomonadati</taxon>
        <taxon>Pseudomonadota</taxon>
        <taxon>Betaproteobacteria</taxon>
        <taxon>Burkholderiales</taxon>
        <taxon>Alcaligenaceae</taxon>
        <taxon>Bordetella</taxon>
    </lineage>
</organism>
<protein>
    <recommendedName>
        <fullName>Bifunctional urease accessory protein UreEF</fullName>
    </recommendedName>
    <domain>
        <recommendedName>
            <fullName>Urease accessory protein UreE</fullName>
        </recommendedName>
    </domain>
    <domain>
        <recommendedName>
            <fullName>Urease accessory protein UreF</fullName>
        </recommendedName>
    </domain>
</protein>
<keyword id="KW-0143">Chaperone</keyword>
<keyword id="KW-0963">Cytoplasm</keyword>
<keyword id="KW-0511">Multifunctional enzyme</keyword>
<keyword id="KW-0533">Nickel</keyword>
<keyword id="KW-0996">Nickel insertion</keyword>
<dbReference type="EMBL" id="AF000579">
    <property type="protein sequence ID" value="AAC46129.1"/>
    <property type="molecule type" value="Genomic_DNA"/>
</dbReference>
<dbReference type="SMR" id="O06708"/>
<dbReference type="GO" id="GO:0005737">
    <property type="term" value="C:cytoplasm"/>
    <property type="evidence" value="ECO:0007669"/>
    <property type="project" value="UniProtKB-SubCell"/>
</dbReference>
<dbReference type="GO" id="GO:0003824">
    <property type="term" value="F:catalytic activity"/>
    <property type="evidence" value="ECO:0007669"/>
    <property type="project" value="UniProtKB-KW"/>
</dbReference>
<dbReference type="GO" id="GO:0016151">
    <property type="term" value="F:nickel cation binding"/>
    <property type="evidence" value="ECO:0007669"/>
    <property type="project" value="UniProtKB-UniRule"/>
</dbReference>
<dbReference type="GO" id="GO:0051082">
    <property type="term" value="F:unfolded protein binding"/>
    <property type="evidence" value="ECO:0007669"/>
    <property type="project" value="UniProtKB-UniRule"/>
</dbReference>
<dbReference type="GO" id="GO:0006457">
    <property type="term" value="P:protein folding"/>
    <property type="evidence" value="ECO:0007669"/>
    <property type="project" value="InterPro"/>
</dbReference>
<dbReference type="GO" id="GO:0065003">
    <property type="term" value="P:protein-containing complex assembly"/>
    <property type="evidence" value="ECO:0007669"/>
    <property type="project" value="InterPro"/>
</dbReference>
<dbReference type="GO" id="GO:0019627">
    <property type="term" value="P:urea metabolic process"/>
    <property type="evidence" value="ECO:0007669"/>
    <property type="project" value="InterPro"/>
</dbReference>
<dbReference type="CDD" id="cd00571">
    <property type="entry name" value="UreE"/>
    <property type="match status" value="1"/>
</dbReference>
<dbReference type="Gene3D" id="1.10.4190.10">
    <property type="entry name" value="Urease accessory protein UreF"/>
    <property type="match status" value="1"/>
</dbReference>
<dbReference type="Gene3D" id="2.60.260.20">
    <property type="entry name" value="Urease metallochaperone UreE, N-terminal domain"/>
    <property type="match status" value="1"/>
</dbReference>
<dbReference type="Gene3D" id="3.30.70.790">
    <property type="entry name" value="UreE, C-terminal domain"/>
    <property type="match status" value="1"/>
</dbReference>
<dbReference type="HAMAP" id="MF_00822">
    <property type="entry name" value="UreE"/>
    <property type="match status" value="1"/>
</dbReference>
<dbReference type="HAMAP" id="MF_01385">
    <property type="entry name" value="UreF"/>
    <property type="match status" value="1"/>
</dbReference>
<dbReference type="InterPro" id="IPR012406">
    <property type="entry name" value="UreE"/>
</dbReference>
<dbReference type="InterPro" id="IPR007864">
    <property type="entry name" value="UreE_C_dom"/>
</dbReference>
<dbReference type="InterPro" id="IPR004029">
    <property type="entry name" value="UreE_N"/>
</dbReference>
<dbReference type="InterPro" id="IPR036118">
    <property type="entry name" value="UreE_N_sf"/>
</dbReference>
<dbReference type="InterPro" id="IPR002639">
    <property type="entry name" value="UreF"/>
</dbReference>
<dbReference type="InterPro" id="IPR038277">
    <property type="entry name" value="UreF_sf"/>
</dbReference>
<dbReference type="NCBIfam" id="NF009762">
    <property type="entry name" value="PRK13263.1"/>
    <property type="match status" value="1"/>
</dbReference>
<dbReference type="PANTHER" id="PTHR33620">
    <property type="entry name" value="UREASE ACCESSORY PROTEIN F"/>
    <property type="match status" value="1"/>
</dbReference>
<dbReference type="PANTHER" id="PTHR33620:SF1">
    <property type="entry name" value="UREASE ACCESSORY PROTEIN F"/>
    <property type="match status" value="1"/>
</dbReference>
<dbReference type="Pfam" id="PF05194">
    <property type="entry name" value="UreE_C"/>
    <property type="match status" value="1"/>
</dbReference>
<dbReference type="Pfam" id="PF02814">
    <property type="entry name" value="UreE_N"/>
    <property type="match status" value="1"/>
</dbReference>
<dbReference type="Pfam" id="PF01730">
    <property type="entry name" value="UreF"/>
    <property type="match status" value="1"/>
</dbReference>
<dbReference type="SMART" id="SM00988">
    <property type="entry name" value="UreE_N"/>
    <property type="match status" value="1"/>
</dbReference>
<dbReference type="SUPFAM" id="SSF69737">
    <property type="entry name" value="Urease metallochaperone UreE, C-terminal domain"/>
    <property type="match status" value="1"/>
</dbReference>
<dbReference type="SUPFAM" id="SSF69287">
    <property type="entry name" value="Urease metallochaperone UreE, N-terminal domain"/>
    <property type="match status" value="1"/>
</dbReference>